<sequence length="436" mass="47895">MANVVVIGAQWGDEGKGKITDLLSRSADVVVRYQGGVNAGHTIVVDDKVLKLHLIPSGILYKNKTCLIGSGTVVDPKILLKEIDMLIDNEIDISGLKLSSTSHVTMPYHRILDEAMEADRGSNKIGTTGRGIGPTYADKSQRNGIRVRDLLNKERLRDVIEIPLREKNGLLEKIYGIKPLKTEDIVEEYLDYGERLSKHVVDCTRTIHSASKNKKNILFEGAQGTLLDLDHGTYPFVTSSNPISGGACIGAGVGPTLIDRVIGVAKAYTTRVGEGPFPTELQGSINDQLCDRGSEFGTTTGRRRRCGWFDGVIGKYAVSVNGLDCLAVTKLDVLDELDEIQVCIAYDLDGERIDYFPTNSDDLKKCKPIFKKLKGWQCSTANCRNLSDLPQNAMNYLRFLAELMEVPIAIVSLGANRDQTIVIEDPIHGPKRALLR</sequence>
<proteinExistence type="inferred from homology"/>
<gene>
    <name evidence="1" type="primary">purA</name>
    <name type="ordered locus">PMT9312_0507</name>
</gene>
<accession>Q31C27</accession>
<reference key="1">
    <citation type="journal article" date="2006" name="Science">
        <title>Genomic islands and the ecology and evolution of Prochlorococcus.</title>
        <authorList>
            <person name="Coleman M.L."/>
            <person name="Sullivan M.B."/>
            <person name="Martiny A.C."/>
            <person name="Steglich C."/>
            <person name="Barry K."/>
            <person name="Delong E.F."/>
            <person name="Chisholm S.W."/>
        </authorList>
    </citation>
    <scope>NUCLEOTIDE SEQUENCE [LARGE SCALE GENOMIC DNA]</scope>
    <source>
        <strain>MIT 9312</strain>
    </source>
</reference>
<feature type="chain" id="PRO_1000000891" description="Adenylosuccinate synthetase">
    <location>
        <begin position="1"/>
        <end position="436"/>
    </location>
</feature>
<feature type="active site" description="Proton acceptor" evidence="1">
    <location>
        <position position="13"/>
    </location>
</feature>
<feature type="active site" description="Proton donor" evidence="1">
    <location>
        <position position="41"/>
    </location>
</feature>
<feature type="binding site" evidence="1">
    <location>
        <begin position="12"/>
        <end position="18"/>
    </location>
    <ligand>
        <name>GTP</name>
        <dbReference type="ChEBI" id="CHEBI:37565"/>
    </ligand>
</feature>
<feature type="binding site" description="in other chain" evidence="1">
    <location>
        <begin position="13"/>
        <end position="16"/>
    </location>
    <ligand>
        <name>IMP</name>
        <dbReference type="ChEBI" id="CHEBI:58053"/>
        <note>ligand shared between dimeric partners</note>
    </ligand>
</feature>
<feature type="binding site" evidence="1">
    <location>
        <position position="13"/>
    </location>
    <ligand>
        <name>Mg(2+)</name>
        <dbReference type="ChEBI" id="CHEBI:18420"/>
    </ligand>
</feature>
<feature type="binding site" description="in other chain" evidence="1">
    <location>
        <begin position="38"/>
        <end position="41"/>
    </location>
    <ligand>
        <name>IMP</name>
        <dbReference type="ChEBI" id="CHEBI:58053"/>
        <note>ligand shared between dimeric partners</note>
    </ligand>
</feature>
<feature type="binding site" evidence="1">
    <location>
        <begin position="40"/>
        <end position="42"/>
    </location>
    <ligand>
        <name>GTP</name>
        <dbReference type="ChEBI" id="CHEBI:37565"/>
    </ligand>
</feature>
<feature type="binding site" evidence="1">
    <location>
        <position position="40"/>
    </location>
    <ligand>
        <name>Mg(2+)</name>
        <dbReference type="ChEBI" id="CHEBI:18420"/>
    </ligand>
</feature>
<feature type="binding site" description="in other chain" evidence="1">
    <location>
        <position position="128"/>
    </location>
    <ligand>
        <name>IMP</name>
        <dbReference type="ChEBI" id="CHEBI:58053"/>
        <note>ligand shared between dimeric partners</note>
    </ligand>
</feature>
<feature type="binding site" evidence="1">
    <location>
        <position position="142"/>
    </location>
    <ligand>
        <name>IMP</name>
        <dbReference type="ChEBI" id="CHEBI:58053"/>
        <note>ligand shared between dimeric partners</note>
    </ligand>
</feature>
<feature type="binding site" description="in other chain" evidence="1">
    <location>
        <position position="223"/>
    </location>
    <ligand>
        <name>IMP</name>
        <dbReference type="ChEBI" id="CHEBI:58053"/>
        <note>ligand shared between dimeric partners</note>
    </ligand>
</feature>
<feature type="binding site" description="in other chain" evidence="1">
    <location>
        <position position="238"/>
    </location>
    <ligand>
        <name>IMP</name>
        <dbReference type="ChEBI" id="CHEBI:58053"/>
        <note>ligand shared between dimeric partners</note>
    </ligand>
</feature>
<feature type="binding site" evidence="1">
    <location>
        <begin position="298"/>
        <end position="304"/>
    </location>
    <ligand>
        <name>substrate</name>
    </ligand>
</feature>
<feature type="binding site" description="in other chain" evidence="1">
    <location>
        <position position="302"/>
    </location>
    <ligand>
        <name>IMP</name>
        <dbReference type="ChEBI" id="CHEBI:58053"/>
        <note>ligand shared between dimeric partners</note>
    </ligand>
</feature>
<feature type="binding site" evidence="1">
    <location>
        <position position="304"/>
    </location>
    <ligand>
        <name>GTP</name>
        <dbReference type="ChEBI" id="CHEBI:37565"/>
    </ligand>
</feature>
<feature type="binding site" evidence="1">
    <location>
        <begin position="330"/>
        <end position="332"/>
    </location>
    <ligand>
        <name>GTP</name>
        <dbReference type="ChEBI" id="CHEBI:37565"/>
    </ligand>
</feature>
<feature type="binding site" evidence="1">
    <location>
        <begin position="412"/>
        <end position="414"/>
    </location>
    <ligand>
        <name>GTP</name>
        <dbReference type="ChEBI" id="CHEBI:37565"/>
    </ligand>
</feature>
<protein>
    <recommendedName>
        <fullName evidence="1">Adenylosuccinate synthetase</fullName>
        <shortName evidence="1">AMPSase</shortName>
        <shortName evidence="1">AdSS</shortName>
        <ecNumber evidence="1">6.3.4.4</ecNumber>
    </recommendedName>
    <alternativeName>
        <fullName evidence="1">IMP--aspartate ligase</fullName>
    </alternativeName>
</protein>
<organism>
    <name type="scientific">Prochlorococcus marinus (strain MIT 9312)</name>
    <dbReference type="NCBI Taxonomy" id="74546"/>
    <lineage>
        <taxon>Bacteria</taxon>
        <taxon>Bacillati</taxon>
        <taxon>Cyanobacteriota</taxon>
        <taxon>Cyanophyceae</taxon>
        <taxon>Synechococcales</taxon>
        <taxon>Prochlorococcaceae</taxon>
        <taxon>Prochlorococcus</taxon>
    </lineage>
</organism>
<evidence type="ECO:0000255" key="1">
    <source>
        <dbReference type="HAMAP-Rule" id="MF_00011"/>
    </source>
</evidence>
<dbReference type="EC" id="6.3.4.4" evidence="1"/>
<dbReference type="EMBL" id="CP000111">
    <property type="protein sequence ID" value="ABB49568.1"/>
    <property type="molecule type" value="Genomic_DNA"/>
</dbReference>
<dbReference type="RefSeq" id="WP_011376066.1">
    <property type="nucleotide sequence ID" value="NC_007577.1"/>
</dbReference>
<dbReference type="SMR" id="Q31C27"/>
<dbReference type="STRING" id="74546.PMT9312_0507"/>
<dbReference type="KEGG" id="pmi:PMT9312_0507"/>
<dbReference type="eggNOG" id="COG0104">
    <property type="taxonomic scope" value="Bacteria"/>
</dbReference>
<dbReference type="HOGENOM" id="CLU_029848_0_0_3"/>
<dbReference type="OrthoDB" id="9807553at2"/>
<dbReference type="UniPathway" id="UPA00075">
    <property type="reaction ID" value="UER00335"/>
</dbReference>
<dbReference type="Proteomes" id="UP000002715">
    <property type="component" value="Chromosome"/>
</dbReference>
<dbReference type="GO" id="GO:0005737">
    <property type="term" value="C:cytoplasm"/>
    <property type="evidence" value="ECO:0007669"/>
    <property type="project" value="UniProtKB-SubCell"/>
</dbReference>
<dbReference type="GO" id="GO:0004019">
    <property type="term" value="F:adenylosuccinate synthase activity"/>
    <property type="evidence" value="ECO:0007669"/>
    <property type="project" value="UniProtKB-UniRule"/>
</dbReference>
<dbReference type="GO" id="GO:0005525">
    <property type="term" value="F:GTP binding"/>
    <property type="evidence" value="ECO:0007669"/>
    <property type="project" value="UniProtKB-UniRule"/>
</dbReference>
<dbReference type="GO" id="GO:0000287">
    <property type="term" value="F:magnesium ion binding"/>
    <property type="evidence" value="ECO:0007669"/>
    <property type="project" value="UniProtKB-UniRule"/>
</dbReference>
<dbReference type="GO" id="GO:0044208">
    <property type="term" value="P:'de novo' AMP biosynthetic process"/>
    <property type="evidence" value="ECO:0007669"/>
    <property type="project" value="UniProtKB-UniRule"/>
</dbReference>
<dbReference type="GO" id="GO:0046040">
    <property type="term" value="P:IMP metabolic process"/>
    <property type="evidence" value="ECO:0007669"/>
    <property type="project" value="TreeGrafter"/>
</dbReference>
<dbReference type="CDD" id="cd03108">
    <property type="entry name" value="AdSS"/>
    <property type="match status" value="1"/>
</dbReference>
<dbReference type="FunFam" id="1.10.300.10:FF:000001">
    <property type="entry name" value="Adenylosuccinate synthetase"/>
    <property type="match status" value="1"/>
</dbReference>
<dbReference type="FunFam" id="3.90.170.10:FF:000001">
    <property type="entry name" value="Adenylosuccinate synthetase"/>
    <property type="match status" value="1"/>
</dbReference>
<dbReference type="Gene3D" id="3.40.440.10">
    <property type="entry name" value="Adenylosuccinate Synthetase, subunit A, domain 1"/>
    <property type="match status" value="1"/>
</dbReference>
<dbReference type="Gene3D" id="1.10.300.10">
    <property type="entry name" value="Adenylosuccinate Synthetase, subunit A, domain 2"/>
    <property type="match status" value="1"/>
</dbReference>
<dbReference type="Gene3D" id="3.90.170.10">
    <property type="entry name" value="Adenylosuccinate Synthetase, subunit A, domain 3"/>
    <property type="match status" value="1"/>
</dbReference>
<dbReference type="HAMAP" id="MF_00011">
    <property type="entry name" value="Adenylosucc_synth"/>
    <property type="match status" value="1"/>
</dbReference>
<dbReference type="InterPro" id="IPR018220">
    <property type="entry name" value="Adenylosuccin_syn_GTP-bd"/>
</dbReference>
<dbReference type="InterPro" id="IPR033128">
    <property type="entry name" value="Adenylosuccin_syn_Lys_AS"/>
</dbReference>
<dbReference type="InterPro" id="IPR042109">
    <property type="entry name" value="Adenylosuccinate_synth_dom1"/>
</dbReference>
<dbReference type="InterPro" id="IPR042110">
    <property type="entry name" value="Adenylosuccinate_synth_dom2"/>
</dbReference>
<dbReference type="InterPro" id="IPR042111">
    <property type="entry name" value="Adenylosuccinate_synth_dom3"/>
</dbReference>
<dbReference type="InterPro" id="IPR001114">
    <property type="entry name" value="Adenylosuccinate_synthetase"/>
</dbReference>
<dbReference type="InterPro" id="IPR027417">
    <property type="entry name" value="P-loop_NTPase"/>
</dbReference>
<dbReference type="NCBIfam" id="NF002223">
    <property type="entry name" value="PRK01117.1"/>
    <property type="match status" value="1"/>
</dbReference>
<dbReference type="NCBIfam" id="TIGR00184">
    <property type="entry name" value="purA"/>
    <property type="match status" value="1"/>
</dbReference>
<dbReference type="PANTHER" id="PTHR11846">
    <property type="entry name" value="ADENYLOSUCCINATE SYNTHETASE"/>
    <property type="match status" value="1"/>
</dbReference>
<dbReference type="PANTHER" id="PTHR11846:SF0">
    <property type="entry name" value="ADENYLOSUCCINATE SYNTHETASE"/>
    <property type="match status" value="1"/>
</dbReference>
<dbReference type="Pfam" id="PF00709">
    <property type="entry name" value="Adenylsucc_synt"/>
    <property type="match status" value="1"/>
</dbReference>
<dbReference type="SMART" id="SM00788">
    <property type="entry name" value="Adenylsucc_synt"/>
    <property type="match status" value="1"/>
</dbReference>
<dbReference type="SUPFAM" id="SSF52540">
    <property type="entry name" value="P-loop containing nucleoside triphosphate hydrolases"/>
    <property type="match status" value="1"/>
</dbReference>
<dbReference type="PROSITE" id="PS01266">
    <property type="entry name" value="ADENYLOSUCCIN_SYN_1"/>
    <property type="match status" value="1"/>
</dbReference>
<dbReference type="PROSITE" id="PS00513">
    <property type="entry name" value="ADENYLOSUCCIN_SYN_2"/>
    <property type="match status" value="1"/>
</dbReference>
<keyword id="KW-0963">Cytoplasm</keyword>
<keyword id="KW-0342">GTP-binding</keyword>
<keyword id="KW-0436">Ligase</keyword>
<keyword id="KW-0460">Magnesium</keyword>
<keyword id="KW-0479">Metal-binding</keyword>
<keyword id="KW-0547">Nucleotide-binding</keyword>
<keyword id="KW-0658">Purine biosynthesis</keyword>
<name>PURA_PROM9</name>
<comment type="function">
    <text evidence="1">Plays an important role in the de novo pathway of purine nucleotide biosynthesis. Catalyzes the first committed step in the biosynthesis of AMP from IMP.</text>
</comment>
<comment type="catalytic activity">
    <reaction evidence="1">
        <text>IMP + L-aspartate + GTP = N(6)-(1,2-dicarboxyethyl)-AMP + GDP + phosphate + 2 H(+)</text>
        <dbReference type="Rhea" id="RHEA:15753"/>
        <dbReference type="ChEBI" id="CHEBI:15378"/>
        <dbReference type="ChEBI" id="CHEBI:29991"/>
        <dbReference type="ChEBI" id="CHEBI:37565"/>
        <dbReference type="ChEBI" id="CHEBI:43474"/>
        <dbReference type="ChEBI" id="CHEBI:57567"/>
        <dbReference type="ChEBI" id="CHEBI:58053"/>
        <dbReference type="ChEBI" id="CHEBI:58189"/>
        <dbReference type="EC" id="6.3.4.4"/>
    </reaction>
</comment>
<comment type="cofactor">
    <cofactor evidence="1">
        <name>Mg(2+)</name>
        <dbReference type="ChEBI" id="CHEBI:18420"/>
    </cofactor>
    <text evidence="1">Binds 1 Mg(2+) ion per subunit.</text>
</comment>
<comment type="pathway">
    <text evidence="1">Purine metabolism; AMP biosynthesis via de novo pathway; AMP from IMP: step 1/2.</text>
</comment>
<comment type="subunit">
    <text evidence="1">Homodimer.</text>
</comment>
<comment type="subcellular location">
    <subcellularLocation>
        <location evidence="1">Cytoplasm</location>
    </subcellularLocation>
</comment>
<comment type="similarity">
    <text evidence="1">Belongs to the adenylosuccinate synthetase family.</text>
</comment>